<sequence>MKSGRFIGVMSGTSLDGVDVVLAAIDETMVAQQASLTWPIPVHLKKGILDICQGQPLTLSQLGQLDTQLGRLFAQAVNALLAQQRLQPRDIVAIGCHGQTVWHEPTGEAPHTLQIGDNNHIVAHTGITVVGDFRRRDIALGGQGAPLVPAFHHALLGHPTEKRMVLNIGGIANLSLLFPGQAVRGYDTGPGNMLMDAWIWRQCAQPYDKDAAWAKEGQVILPLLQKMLRDPYFAASAPKSTGREYFNYGWLERHLAAFPGADARDVQATLAELTAVSIAQQVLLNGGCERLMVCGGGGRNPLVMARLAALLTGIEVSTTDKAGISGDDMEALAFAWLAWRTLAGLPGNLPSVTGATEASVLGAIYPANPITQS</sequence>
<name>ANMK_SALPK</name>
<accession>B5BKC3</accession>
<organism>
    <name type="scientific">Salmonella paratyphi A (strain AKU_12601)</name>
    <dbReference type="NCBI Taxonomy" id="554290"/>
    <lineage>
        <taxon>Bacteria</taxon>
        <taxon>Pseudomonadati</taxon>
        <taxon>Pseudomonadota</taxon>
        <taxon>Gammaproteobacteria</taxon>
        <taxon>Enterobacterales</taxon>
        <taxon>Enterobacteriaceae</taxon>
        <taxon>Salmonella</taxon>
    </lineage>
</organism>
<comment type="function">
    <text evidence="1">Catalyzes the specific phosphorylation of 1,6-anhydro-N-acetylmuramic acid (anhMurNAc) with the simultaneous cleavage of the 1,6-anhydro ring, generating MurNAc-6-P. Is required for the utilization of anhMurNAc either imported from the medium or derived from its own cell wall murein, and thus plays a role in cell wall recycling.</text>
</comment>
<comment type="catalytic activity">
    <reaction evidence="1">
        <text>1,6-anhydro-N-acetyl-beta-muramate + ATP + H2O = N-acetyl-D-muramate 6-phosphate + ADP + H(+)</text>
        <dbReference type="Rhea" id="RHEA:24952"/>
        <dbReference type="ChEBI" id="CHEBI:15377"/>
        <dbReference type="ChEBI" id="CHEBI:15378"/>
        <dbReference type="ChEBI" id="CHEBI:30616"/>
        <dbReference type="ChEBI" id="CHEBI:58690"/>
        <dbReference type="ChEBI" id="CHEBI:58722"/>
        <dbReference type="ChEBI" id="CHEBI:456216"/>
        <dbReference type="EC" id="2.7.1.170"/>
    </reaction>
</comment>
<comment type="pathway">
    <text evidence="1">Amino-sugar metabolism; 1,6-anhydro-N-acetylmuramate degradation.</text>
</comment>
<comment type="pathway">
    <text evidence="1">Cell wall biogenesis; peptidoglycan recycling.</text>
</comment>
<comment type="similarity">
    <text evidence="1">Belongs to the anhydro-N-acetylmuramic acid kinase family.</text>
</comment>
<protein>
    <recommendedName>
        <fullName evidence="1">Anhydro-N-acetylmuramic acid kinase</fullName>
        <ecNumber evidence="1">2.7.1.170</ecNumber>
    </recommendedName>
    <alternativeName>
        <fullName evidence="1">AnhMurNAc kinase</fullName>
    </alternativeName>
</protein>
<reference key="1">
    <citation type="journal article" date="2009" name="BMC Genomics">
        <title>Pseudogene accumulation in the evolutionary histories of Salmonella enterica serovars Paratyphi A and Typhi.</title>
        <authorList>
            <person name="Holt K.E."/>
            <person name="Thomson N.R."/>
            <person name="Wain J."/>
            <person name="Langridge G.C."/>
            <person name="Hasan R."/>
            <person name="Bhutta Z.A."/>
            <person name="Quail M.A."/>
            <person name="Norbertczak H."/>
            <person name="Walker D."/>
            <person name="Simmonds M."/>
            <person name="White B."/>
            <person name="Bason N."/>
            <person name="Mungall K."/>
            <person name="Dougan G."/>
            <person name="Parkhill J."/>
        </authorList>
    </citation>
    <scope>NUCLEOTIDE SEQUENCE [LARGE SCALE GENOMIC DNA]</scope>
    <source>
        <strain>AKU_12601</strain>
    </source>
</reference>
<feature type="chain" id="PRO_1000140173" description="Anhydro-N-acetylmuramic acid kinase">
    <location>
        <begin position="1"/>
        <end position="373"/>
    </location>
</feature>
<feature type="binding site" evidence="1">
    <location>
        <begin position="12"/>
        <end position="19"/>
    </location>
    <ligand>
        <name>ATP</name>
        <dbReference type="ChEBI" id="CHEBI:30616"/>
    </ligand>
</feature>
<dbReference type="EC" id="2.7.1.170" evidence="1"/>
<dbReference type="EMBL" id="FM200053">
    <property type="protein sequence ID" value="CAR59482.1"/>
    <property type="molecule type" value="Genomic_DNA"/>
</dbReference>
<dbReference type="RefSeq" id="WP_000835012.1">
    <property type="nucleotide sequence ID" value="NC_011147.1"/>
</dbReference>
<dbReference type="SMR" id="B5BKC3"/>
<dbReference type="KEGG" id="sek:SSPA1307"/>
<dbReference type="HOGENOM" id="CLU_038782_0_0_6"/>
<dbReference type="UniPathway" id="UPA00343"/>
<dbReference type="UniPathway" id="UPA00544"/>
<dbReference type="Proteomes" id="UP000001869">
    <property type="component" value="Chromosome"/>
</dbReference>
<dbReference type="GO" id="GO:0005524">
    <property type="term" value="F:ATP binding"/>
    <property type="evidence" value="ECO:0007669"/>
    <property type="project" value="UniProtKB-UniRule"/>
</dbReference>
<dbReference type="GO" id="GO:0016301">
    <property type="term" value="F:kinase activity"/>
    <property type="evidence" value="ECO:0007669"/>
    <property type="project" value="UniProtKB-KW"/>
</dbReference>
<dbReference type="GO" id="GO:0016773">
    <property type="term" value="F:phosphotransferase activity, alcohol group as acceptor"/>
    <property type="evidence" value="ECO:0007669"/>
    <property type="project" value="UniProtKB-UniRule"/>
</dbReference>
<dbReference type="GO" id="GO:0097175">
    <property type="term" value="P:1,6-anhydro-N-acetyl-beta-muramic acid catabolic process"/>
    <property type="evidence" value="ECO:0007669"/>
    <property type="project" value="UniProtKB-UniRule"/>
</dbReference>
<dbReference type="GO" id="GO:0006040">
    <property type="term" value="P:amino sugar metabolic process"/>
    <property type="evidence" value="ECO:0007669"/>
    <property type="project" value="InterPro"/>
</dbReference>
<dbReference type="GO" id="GO:0009254">
    <property type="term" value="P:peptidoglycan turnover"/>
    <property type="evidence" value="ECO:0007669"/>
    <property type="project" value="UniProtKB-UniRule"/>
</dbReference>
<dbReference type="CDD" id="cd24050">
    <property type="entry name" value="ASKHA_NBD_ANMK"/>
    <property type="match status" value="1"/>
</dbReference>
<dbReference type="Gene3D" id="3.30.420.40">
    <property type="match status" value="2"/>
</dbReference>
<dbReference type="HAMAP" id="MF_01270">
    <property type="entry name" value="AnhMurNAc_kinase"/>
    <property type="match status" value="1"/>
</dbReference>
<dbReference type="InterPro" id="IPR005338">
    <property type="entry name" value="Anhydro_N_Ac-Mur_kinase"/>
</dbReference>
<dbReference type="InterPro" id="IPR043129">
    <property type="entry name" value="ATPase_NBD"/>
</dbReference>
<dbReference type="NCBIfam" id="NF007138">
    <property type="entry name" value="PRK09585.1-1"/>
    <property type="match status" value="1"/>
</dbReference>
<dbReference type="NCBIfam" id="NF007139">
    <property type="entry name" value="PRK09585.1-3"/>
    <property type="match status" value="1"/>
</dbReference>
<dbReference type="NCBIfam" id="NF007148">
    <property type="entry name" value="PRK09585.3-2"/>
    <property type="match status" value="1"/>
</dbReference>
<dbReference type="PANTHER" id="PTHR30605">
    <property type="entry name" value="ANHYDRO-N-ACETYLMURAMIC ACID KINASE"/>
    <property type="match status" value="1"/>
</dbReference>
<dbReference type="PANTHER" id="PTHR30605:SF0">
    <property type="entry name" value="ANHYDRO-N-ACETYLMURAMIC ACID KINASE"/>
    <property type="match status" value="1"/>
</dbReference>
<dbReference type="Pfam" id="PF03702">
    <property type="entry name" value="AnmK"/>
    <property type="match status" value="1"/>
</dbReference>
<dbReference type="SUPFAM" id="SSF53067">
    <property type="entry name" value="Actin-like ATPase domain"/>
    <property type="match status" value="1"/>
</dbReference>
<evidence type="ECO:0000255" key="1">
    <source>
        <dbReference type="HAMAP-Rule" id="MF_01270"/>
    </source>
</evidence>
<proteinExistence type="inferred from homology"/>
<gene>
    <name evidence="1" type="primary">anmK</name>
    <name type="ordered locus">SSPA1307</name>
</gene>
<keyword id="KW-0067">ATP-binding</keyword>
<keyword id="KW-0119">Carbohydrate metabolism</keyword>
<keyword id="KW-0418">Kinase</keyword>
<keyword id="KW-0547">Nucleotide-binding</keyword>
<keyword id="KW-0808">Transferase</keyword>